<evidence type="ECO:0000255" key="1">
    <source>
        <dbReference type="HAMAP-Rule" id="MF_00052"/>
    </source>
</evidence>
<evidence type="ECO:0000255" key="2">
    <source>
        <dbReference type="PROSITE-ProRule" id="PRU01319"/>
    </source>
</evidence>
<gene>
    <name evidence="1" type="primary">rnhB</name>
    <name type="ordered locus">Hhal_1454</name>
</gene>
<dbReference type="EC" id="3.1.26.4" evidence="1"/>
<dbReference type="EMBL" id="CP000544">
    <property type="protein sequence ID" value="ABM62221.1"/>
    <property type="molecule type" value="Genomic_DNA"/>
</dbReference>
<dbReference type="RefSeq" id="WP_011814243.1">
    <property type="nucleotide sequence ID" value="NC_008789.1"/>
</dbReference>
<dbReference type="SMR" id="A1WX09"/>
<dbReference type="STRING" id="349124.Hhal_1454"/>
<dbReference type="KEGG" id="hha:Hhal_1454"/>
<dbReference type="eggNOG" id="COG0164">
    <property type="taxonomic scope" value="Bacteria"/>
</dbReference>
<dbReference type="HOGENOM" id="CLU_036532_3_2_6"/>
<dbReference type="OrthoDB" id="9803420at2"/>
<dbReference type="Proteomes" id="UP000000647">
    <property type="component" value="Chromosome"/>
</dbReference>
<dbReference type="GO" id="GO:0005737">
    <property type="term" value="C:cytoplasm"/>
    <property type="evidence" value="ECO:0007669"/>
    <property type="project" value="UniProtKB-SubCell"/>
</dbReference>
<dbReference type="GO" id="GO:0032299">
    <property type="term" value="C:ribonuclease H2 complex"/>
    <property type="evidence" value="ECO:0007669"/>
    <property type="project" value="TreeGrafter"/>
</dbReference>
<dbReference type="GO" id="GO:0030145">
    <property type="term" value="F:manganese ion binding"/>
    <property type="evidence" value="ECO:0007669"/>
    <property type="project" value="UniProtKB-UniRule"/>
</dbReference>
<dbReference type="GO" id="GO:0003723">
    <property type="term" value="F:RNA binding"/>
    <property type="evidence" value="ECO:0007669"/>
    <property type="project" value="InterPro"/>
</dbReference>
<dbReference type="GO" id="GO:0004523">
    <property type="term" value="F:RNA-DNA hybrid ribonuclease activity"/>
    <property type="evidence" value="ECO:0007669"/>
    <property type="project" value="UniProtKB-UniRule"/>
</dbReference>
<dbReference type="GO" id="GO:0043137">
    <property type="term" value="P:DNA replication, removal of RNA primer"/>
    <property type="evidence" value="ECO:0007669"/>
    <property type="project" value="TreeGrafter"/>
</dbReference>
<dbReference type="GO" id="GO:0006298">
    <property type="term" value="P:mismatch repair"/>
    <property type="evidence" value="ECO:0007669"/>
    <property type="project" value="TreeGrafter"/>
</dbReference>
<dbReference type="CDD" id="cd07182">
    <property type="entry name" value="RNase_HII_bacteria_HII_like"/>
    <property type="match status" value="1"/>
</dbReference>
<dbReference type="Gene3D" id="3.30.420.10">
    <property type="entry name" value="Ribonuclease H-like superfamily/Ribonuclease H"/>
    <property type="match status" value="1"/>
</dbReference>
<dbReference type="HAMAP" id="MF_00052_B">
    <property type="entry name" value="RNase_HII_B"/>
    <property type="match status" value="1"/>
</dbReference>
<dbReference type="InterPro" id="IPR022898">
    <property type="entry name" value="RNase_HII"/>
</dbReference>
<dbReference type="InterPro" id="IPR001352">
    <property type="entry name" value="RNase_HII/HIII"/>
</dbReference>
<dbReference type="InterPro" id="IPR024567">
    <property type="entry name" value="RNase_HII/HIII_dom"/>
</dbReference>
<dbReference type="InterPro" id="IPR012337">
    <property type="entry name" value="RNaseH-like_sf"/>
</dbReference>
<dbReference type="InterPro" id="IPR036397">
    <property type="entry name" value="RNaseH_sf"/>
</dbReference>
<dbReference type="NCBIfam" id="NF000595">
    <property type="entry name" value="PRK00015.1-3"/>
    <property type="match status" value="1"/>
</dbReference>
<dbReference type="PANTHER" id="PTHR10954">
    <property type="entry name" value="RIBONUCLEASE H2 SUBUNIT A"/>
    <property type="match status" value="1"/>
</dbReference>
<dbReference type="PANTHER" id="PTHR10954:SF18">
    <property type="entry name" value="RIBONUCLEASE HII"/>
    <property type="match status" value="1"/>
</dbReference>
<dbReference type="Pfam" id="PF01351">
    <property type="entry name" value="RNase_HII"/>
    <property type="match status" value="1"/>
</dbReference>
<dbReference type="SUPFAM" id="SSF53098">
    <property type="entry name" value="Ribonuclease H-like"/>
    <property type="match status" value="1"/>
</dbReference>
<dbReference type="PROSITE" id="PS51975">
    <property type="entry name" value="RNASE_H_2"/>
    <property type="match status" value="1"/>
</dbReference>
<comment type="function">
    <text evidence="1">Endonuclease that specifically degrades the RNA of RNA-DNA hybrids.</text>
</comment>
<comment type="catalytic activity">
    <reaction evidence="1">
        <text>Endonucleolytic cleavage to 5'-phosphomonoester.</text>
        <dbReference type="EC" id="3.1.26.4"/>
    </reaction>
</comment>
<comment type="cofactor">
    <cofactor evidence="1">
        <name>Mn(2+)</name>
        <dbReference type="ChEBI" id="CHEBI:29035"/>
    </cofactor>
    <cofactor evidence="1">
        <name>Mg(2+)</name>
        <dbReference type="ChEBI" id="CHEBI:18420"/>
    </cofactor>
    <text evidence="1">Manganese or magnesium. Binds 1 divalent metal ion per monomer in the absence of substrate. May bind a second metal ion after substrate binding.</text>
</comment>
<comment type="subcellular location">
    <subcellularLocation>
        <location evidence="1">Cytoplasm</location>
    </subcellularLocation>
</comment>
<comment type="similarity">
    <text evidence="1">Belongs to the RNase HII family.</text>
</comment>
<protein>
    <recommendedName>
        <fullName evidence="1">Ribonuclease HII</fullName>
        <shortName evidence="1">RNase HII</shortName>
        <ecNumber evidence="1">3.1.26.4</ecNumber>
    </recommendedName>
</protein>
<proteinExistence type="inferred from homology"/>
<organism>
    <name type="scientific">Halorhodospira halophila (strain DSM 244 / SL1)</name>
    <name type="common">Ectothiorhodospira halophila (strain DSM 244 / SL1)</name>
    <dbReference type="NCBI Taxonomy" id="349124"/>
    <lineage>
        <taxon>Bacteria</taxon>
        <taxon>Pseudomonadati</taxon>
        <taxon>Pseudomonadota</taxon>
        <taxon>Gammaproteobacteria</taxon>
        <taxon>Chromatiales</taxon>
        <taxon>Ectothiorhodospiraceae</taxon>
        <taxon>Halorhodospira</taxon>
    </lineage>
</organism>
<sequence length="195" mass="20462">MTPSRGAWGVVGVDEAGRGPWAGPVVAAAVVLAEPIAGVTDSKRLSARSRERAAALIRSEAVAWGVGRADVTEIDALNIRRATFLAMARAVAVVAETSPIAEVLVDGREIPDDLPAPARPVVGGDALEPAISAASILAKTLRDAEMVLLDEAYPGYGFGRHKGYGTAEHRRALEELGPCPMHRRSFAPVRRLLGG</sequence>
<accession>A1WX09</accession>
<name>RNH2_HALHL</name>
<reference key="1">
    <citation type="submission" date="2006-12" db="EMBL/GenBank/DDBJ databases">
        <title>Complete sequence of Halorhodospira halophila SL1.</title>
        <authorList>
            <consortium name="US DOE Joint Genome Institute"/>
            <person name="Copeland A."/>
            <person name="Lucas S."/>
            <person name="Lapidus A."/>
            <person name="Barry K."/>
            <person name="Detter J.C."/>
            <person name="Glavina del Rio T."/>
            <person name="Hammon N."/>
            <person name="Israni S."/>
            <person name="Dalin E."/>
            <person name="Tice H."/>
            <person name="Pitluck S."/>
            <person name="Saunders E."/>
            <person name="Brettin T."/>
            <person name="Bruce D."/>
            <person name="Han C."/>
            <person name="Tapia R."/>
            <person name="Schmutz J."/>
            <person name="Larimer F."/>
            <person name="Land M."/>
            <person name="Hauser L."/>
            <person name="Kyrpides N."/>
            <person name="Mikhailova N."/>
            <person name="Hoff W."/>
            <person name="Richardson P."/>
        </authorList>
    </citation>
    <scope>NUCLEOTIDE SEQUENCE [LARGE SCALE GENOMIC DNA]</scope>
    <source>
        <strain>DSM 244 / SL1</strain>
    </source>
</reference>
<keyword id="KW-0963">Cytoplasm</keyword>
<keyword id="KW-0255">Endonuclease</keyword>
<keyword id="KW-0378">Hydrolase</keyword>
<keyword id="KW-0464">Manganese</keyword>
<keyword id="KW-0479">Metal-binding</keyword>
<keyword id="KW-0540">Nuclease</keyword>
<keyword id="KW-1185">Reference proteome</keyword>
<feature type="chain" id="PRO_0000334903" description="Ribonuclease HII">
    <location>
        <begin position="1"/>
        <end position="195"/>
    </location>
</feature>
<feature type="domain" description="RNase H type-2" evidence="2">
    <location>
        <begin position="8"/>
        <end position="195"/>
    </location>
</feature>
<feature type="binding site" evidence="1">
    <location>
        <position position="14"/>
    </location>
    <ligand>
        <name>a divalent metal cation</name>
        <dbReference type="ChEBI" id="CHEBI:60240"/>
    </ligand>
</feature>
<feature type="binding site" evidence="1">
    <location>
        <position position="15"/>
    </location>
    <ligand>
        <name>a divalent metal cation</name>
        <dbReference type="ChEBI" id="CHEBI:60240"/>
    </ligand>
</feature>
<feature type="binding site" evidence="1">
    <location>
        <position position="106"/>
    </location>
    <ligand>
        <name>a divalent metal cation</name>
        <dbReference type="ChEBI" id="CHEBI:60240"/>
    </ligand>
</feature>